<name>ISPG_BACCN</name>
<feature type="chain" id="PRO_1000076876" description="4-hydroxy-3-methylbut-2-en-1-yl diphosphate synthase (flavodoxin)">
    <location>
        <begin position="1"/>
        <end position="368"/>
    </location>
</feature>
<feature type="binding site" evidence="1">
    <location>
        <position position="268"/>
    </location>
    <ligand>
        <name>[4Fe-4S] cluster</name>
        <dbReference type="ChEBI" id="CHEBI:49883"/>
    </ligand>
</feature>
<feature type="binding site" evidence="1">
    <location>
        <position position="271"/>
    </location>
    <ligand>
        <name>[4Fe-4S] cluster</name>
        <dbReference type="ChEBI" id="CHEBI:49883"/>
    </ligand>
</feature>
<feature type="binding site" evidence="1">
    <location>
        <position position="303"/>
    </location>
    <ligand>
        <name>[4Fe-4S] cluster</name>
        <dbReference type="ChEBI" id="CHEBI:49883"/>
    </ligand>
</feature>
<feature type="binding site" evidence="1">
    <location>
        <position position="310"/>
    </location>
    <ligand>
        <name>[4Fe-4S] cluster</name>
        <dbReference type="ChEBI" id="CHEBI:49883"/>
    </ligand>
</feature>
<reference key="1">
    <citation type="journal article" date="2008" name="Chem. Biol. Interact.">
        <title>Extending the Bacillus cereus group genomics to putative food-borne pathogens of different toxicity.</title>
        <authorList>
            <person name="Lapidus A."/>
            <person name="Goltsman E."/>
            <person name="Auger S."/>
            <person name="Galleron N."/>
            <person name="Segurens B."/>
            <person name="Dossat C."/>
            <person name="Land M.L."/>
            <person name="Broussolle V."/>
            <person name="Brillard J."/>
            <person name="Guinebretiere M.-H."/>
            <person name="Sanchis V."/>
            <person name="Nguen-the C."/>
            <person name="Lereclus D."/>
            <person name="Richardson P."/>
            <person name="Wincker P."/>
            <person name="Weissenbach J."/>
            <person name="Ehrlich S.D."/>
            <person name="Sorokin A."/>
        </authorList>
    </citation>
    <scope>NUCLEOTIDE SEQUENCE [LARGE SCALE GENOMIC DNA]</scope>
    <source>
        <strain>DSM 22905 / CIP 110041 / 391-98 / NVH 391-98</strain>
    </source>
</reference>
<sequence length="368" mass="39769">MNEITHRTKTRPVKVGNLTIGGNNELIIQSMTTTKTHDVEATVAEIKRLEEAGCQIVRVAVPDERAANAIADIKKQINIPLVADIHFDYRLALKAIEGGIDKVRINPGNIGRRHKVEAVVNAAKERGIPIRIGVNAGSLERHILEKYGYPTADGMVESALHHIKILEDLDFHDIIVSMKASDVNLAIEAYEKAARAFDYPLHLGITESGTLFAGTVKSAAGLGAILSKGIGNTLRISLSADPVEEVKVARELLKSFGLASNAATLISCPTCGRIEIDLISIANEVEEYISTLKVPIKVAVLGCAVNGPGEAREADIGIAGARGEGLLFRKGKVVRKVPEETMVEELKKEIDVIAAEMAENQEKEKQEQ</sequence>
<gene>
    <name evidence="1" type="primary">ispG</name>
    <name type="ordered locus">Bcer98_3006</name>
</gene>
<evidence type="ECO:0000255" key="1">
    <source>
        <dbReference type="HAMAP-Rule" id="MF_00159"/>
    </source>
</evidence>
<keyword id="KW-0004">4Fe-4S</keyword>
<keyword id="KW-0408">Iron</keyword>
<keyword id="KW-0411">Iron-sulfur</keyword>
<keyword id="KW-0414">Isoprene biosynthesis</keyword>
<keyword id="KW-0479">Metal-binding</keyword>
<keyword id="KW-0560">Oxidoreductase</keyword>
<comment type="function">
    <text evidence="1">Converts 2C-methyl-D-erythritol 2,4-cyclodiphosphate (ME-2,4cPP) into 1-hydroxy-2-methyl-2-(E)-butenyl 4-diphosphate.</text>
</comment>
<comment type="catalytic activity">
    <reaction evidence="1">
        <text>(2E)-4-hydroxy-3-methylbut-2-enyl diphosphate + oxidized [flavodoxin] + H2O + 2 H(+) = 2-C-methyl-D-erythritol 2,4-cyclic diphosphate + reduced [flavodoxin]</text>
        <dbReference type="Rhea" id="RHEA:43604"/>
        <dbReference type="Rhea" id="RHEA-COMP:10622"/>
        <dbReference type="Rhea" id="RHEA-COMP:10623"/>
        <dbReference type="ChEBI" id="CHEBI:15377"/>
        <dbReference type="ChEBI" id="CHEBI:15378"/>
        <dbReference type="ChEBI" id="CHEBI:57618"/>
        <dbReference type="ChEBI" id="CHEBI:58210"/>
        <dbReference type="ChEBI" id="CHEBI:58483"/>
        <dbReference type="ChEBI" id="CHEBI:128753"/>
        <dbReference type="EC" id="1.17.7.3"/>
    </reaction>
</comment>
<comment type="cofactor">
    <cofactor evidence="1">
        <name>[4Fe-4S] cluster</name>
        <dbReference type="ChEBI" id="CHEBI:49883"/>
    </cofactor>
    <text evidence="1">Binds 1 [4Fe-4S] cluster.</text>
</comment>
<comment type="pathway">
    <text evidence="1">Isoprenoid biosynthesis; isopentenyl diphosphate biosynthesis via DXP pathway; isopentenyl diphosphate from 1-deoxy-D-xylulose 5-phosphate: step 5/6.</text>
</comment>
<comment type="similarity">
    <text evidence="1">Belongs to the IspG family.</text>
</comment>
<organism>
    <name type="scientific">Bacillus cytotoxicus (strain DSM 22905 / CIP 110041 / 391-98 / NVH 391-98)</name>
    <dbReference type="NCBI Taxonomy" id="315749"/>
    <lineage>
        <taxon>Bacteria</taxon>
        <taxon>Bacillati</taxon>
        <taxon>Bacillota</taxon>
        <taxon>Bacilli</taxon>
        <taxon>Bacillales</taxon>
        <taxon>Bacillaceae</taxon>
        <taxon>Bacillus</taxon>
        <taxon>Bacillus cereus group</taxon>
    </lineage>
</organism>
<dbReference type="EC" id="1.17.7.3" evidence="1"/>
<dbReference type="EMBL" id="CP000764">
    <property type="protein sequence ID" value="ABS23233.1"/>
    <property type="molecule type" value="Genomic_DNA"/>
</dbReference>
<dbReference type="SMR" id="A7GSX5"/>
<dbReference type="STRING" id="315749.Bcer98_3006"/>
<dbReference type="KEGG" id="bcy:Bcer98_3006"/>
<dbReference type="eggNOG" id="COG0821">
    <property type="taxonomic scope" value="Bacteria"/>
</dbReference>
<dbReference type="HOGENOM" id="CLU_042258_0_0_9"/>
<dbReference type="OrthoDB" id="9803214at2"/>
<dbReference type="UniPathway" id="UPA00056">
    <property type="reaction ID" value="UER00096"/>
</dbReference>
<dbReference type="Proteomes" id="UP000002300">
    <property type="component" value="Chromosome"/>
</dbReference>
<dbReference type="GO" id="GO:0051539">
    <property type="term" value="F:4 iron, 4 sulfur cluster binding"/>
    <property type="evidence" value="ECO:0007669"/>
    <property type="project" value="UniProtKB-UniRule"/>
</dbReference>
<dbReference type="GO" id="GO:0046429">
    <property type="term" value="F:4-hydroxy-3-methylbut-2-en-1-yl diphosphate synthase activity (ferredoxin)"/>
    <property type="evidence" value="ECO:0007669"/>
    <property type="project" value="UniProtKB-UniRule"/>
</dbReference>
<dbReference type="GO" id="GO:0141197">
    <property type="term" value="F:4-hydroxy-3-methylbut-2-enyl-diphosphate synthase activity (flavodoxin)"/>
    <property type="evidence" value="ECO:0007669"/>
    <property type="project" value="UniProtKB-EC"/>
</dbReference>
<dbReference type="GO" id="GO:0005506">
    <property type="term" value="F:iron ion binding"/>
    <property type="evidence" value="ECO:0007669"/>
    <property type="project" value="InterPro"/>
</dbReference>
<dbReference type="GO" id="GO:0019288">
    <property type="term" value="P:isopentenyl diphosphate biosynthetic process, methylerythritol 4-phosphate pathway"/>
    <property type="evidence" value="ECO:0007669"/>
    <property type="project" value="UniProtKB-UniRule"/>
</dbReference>
<dbReference type="GO" id="GO:0016114">
    <property type="term" value="P:terpenoid biosynthetic process"/>
    <property type="evidence" value="ECO:0007669"/>
    <property type="project" value="InterPro"/>
</dbReference>
<dbReference type="FunFam" id="3.20.20.20:FF:000001">
    <property type="entry name" value="4-hydroxy-3-methylbut-2-en-1-yl diphosphate synthase (flavodoxin)"/>
    <property type="match status" value="1"/>
</dbReference>
<dbReference type="FunFam" id="3.30.413.10:FF:000005">
    <property type="entry name" value="4-hydroxy-3-methylbut-2-en-1-yl diphosphate synthase (flavodoxin)"/>
    <property type="match status" value="1"/>
</dbReference>
<dbReference type="Gene3D" id="3.20.20.20">
    <property type="entry name" value="Dihydropteroate synthase-like"/>
    <property type="match status" value="1"/>
</dbReference>
<dbReference type="Gene3D" id="3.30.413.10">
    <property type="entry name" value="Sulfite Reductase Hemoprotein, domain 1"/>
    <property type="match status" value="1"/>
</dbReference>
<dbReference type="HAMAP" id="MF_00159">
    <property type="entry name" value="IspG"/>
    <property type="match status" value="1"/>
</dbReference>
<dbReference type="InterPro" id="IPR011005">
    <property type="entry name" value="Dihydropteroate_synth-like_sf"/>
</dbReference>
<dbReference type="InterPro" id="IPR016425">
    <property type="entry name" value="IspG_bac"/>
</dbReference>
<dbReference type="InterPro" id="IPR004588">
    <property type="entry name" value="IspG_bac-typ"/>
</dbReference>
<dbReference type="InterPro" id="IPR045854">
    <property type="entry name" value="NO2/SO3_Rdtase_4Fe4S_sf"/>
</dbReference>
<dbReference type="NCBIfam" id="TIGR00612">
    <property type="entry name" value="ispG_gcpE"/>
    <property type="match status" value="1"/>
</dbReference>
<dbReference type="NCBIfam" id="NF001540">
    <property type="entry name" value="PRK00366.1"/>
    <property type="match status" value="1"/>
</dbReference>
<dbReference type="PANTHER" id="PTHR30454">
    <property type="entry name" value="4-HYDROXY-3-METHYLBUT-2-EN-1-YL DIPHOSPHATE SYNTHASE"/>
    <property type="match status" value="1"/>
</dbReference>
<dbReference type="PANTHER" id="PTHR30454:SF0">
    <property type="entry name" value="4-HYDROXY-3-METHYLBUT-2-EN-1-YL DIPHOSPHATE SYNTHASE (FERREDOXIN), CHLOROPLASTIC"/>
    <property type="match status" value="1"/>
</dbReference>
<dbReference type="Pfam" id="PF04551">
    <property type="entry name" value="GcpE"/>
    <property type="match status" value="1"/>
</dbReference>
<dbReference type="PIRSF" id="PIRSF004640">
    <property type="entry name" value="IspG"/>
    <property type="match status" value="1"/>
</dbReference>
<dbReference type="SUPFAM" id="SSF51717">
    <property type="entry name" value="Dihydropteroate synthetase-like"/>
    <property type="match status" value="1"/>
</dbReference>
<dbReference type="SUPFAM" id="SSF56014">
    <property type="entry name" value="Nitrite and sulphite reductase 4Fe-4S domain-like"/>
    <property type="match status" value="1"/>
</dbReference>
<protein>
    <recommendedName>
        <fullName evidence="1">4-hydroxy-3-methylbut-2-en-1-yl diphosphate synthase (flavodoxin)</fullName>
        <ecNumber evidence="1">1.17.7.3</ecNumber>
    </recommendedName>
    <alternativeName>
        <fullName evidence="1">1-hydroxy-2-methyl-2-(E)-butenyl 4-diphosphate synthase</fullName>
    </alternativeName>
</protein>
<accession>A7GSX5</accession>
<proteinExistence type="inferred from homology"/>